<evidence type="ECO:0000255" key="1">
    <source>
        <dbReference type="HAMAP-Rule" id="MF_00275"/>
    </source>
</evidence>
<organism>
    <name type="scientific">Ralstonia pickettii (strain 12J)</name>
    <dbReference type="NCBI Taxonomy" id="402626"/>
    <lineage>
        <taxon>Bacteria</taxon>
        <taxon>Pseudomonadati</taxon>
        <taxon>Pseudomonadota</taxon>
        <taxon>Betaproteobacteria</taxon>
        <taxon>Burkholderiales</taxon>
        <taxon>Burkholderiaceae</taxon>
        <taxon>Ralstonia</taxon>
    </lineage>
</organism>
<accession>B2UH25</accession>
<proteinExistence type="inferred from homology"/>
<sequence>MNAFLLQLAIYLVVLLVLAKPLGAYMTGVFGDKPSRAHWLGPVERLFYRVAGVNPQAEMGWKHYALAVIVVNVLGALAVYALQRAQQWLPLNPQGFGAVTPDSSFNTAVSFVTNTNWQGYSGESTMSYLTQMLGLAVQNFLSAATGIAVVIALIRGFARHSANTIGNFWVDFTRSTVYVLLPLSIIVSVFFVSQGVIQNFDGYKEVTTVTATTYDNPKMDASGQPIKDAQGNPVTEKATTQTQTLPMGPIASQEAIKMIGTNGGGPFNANSAHPYENPNALTNFVQMLAIFIIPAALCFTFGGMVGDGRQGWAVLAAMTVLFVVLAVFLAWAELHPNPMLANLGIDEAVGNMEGKETRFGIVASSLFATITTAASCGAVNAMHDSLTALGGFVPMFLMQLGEVVFGGVGSGLYGMLVYAILAVFIAGLMIGRTPEYLGKKIEVFEMKMTSIAILVTPLLVLVGTAVAVVVTQGKAGIFNPGTHGFSEVLYAFSSAANNNGSAFAGLSANTPFYNLALGICMWLGRFWIIVPVLAMAGTFAAKKRLPVTAGTLPTHGPLFVVLLIGSVLLVGALTYIPALALGPIAEHLAR</sequence>
<gene>
    <name evidence="1" type="primary">kdpA</name>
    <name type="ordered locus">Rpic_3589</name>
</gene>
<reference key="1">
    <citation type="submission" date="2008-05" db="EMBL/GenBank/DDBJ databases">
        <title>Complete sequence of chromosome 1 of Ralstonia pickettii 12J.</title>
        <authorList>
            <person name="Lucas S."/>
            <person name="Copeland A."/>
            <person name="Lapidus A."/>
            <person name="Glavina del Rio T."/>
            <person name="Dalin E."/>
            <person name="Tice H."/>
            <person name="Bruce D."/>
            <person name="Goodwin L."/>
            <person name="Pitluck S."/>
            <person name="Meincke L."/>
            <person name="Brettin T."/>
            <person name="Detter J.C."/>
            <person name="Han C."/>
            <person name="Kuske C.R."/>
            <person name="Schmutz J."/>
            <person name="Larimer F."/>
            <person name="Land M."/>
            <person name="Hauser L."/>
            <person name="Kyrpides N."/>
            <person name="Mikhailova N."/>
            <person name="Marsh T."/>
            <person name="Richardson P."/>
        </authorList>
    </citation>
    <scope>NUCLEOTIDE SEQUENCE [LARGE SCALE GENOMIC DNA]</scope>
    <source>
        <strain>12J</strain>
    </source>
</reference>
<name>KDPA_RALPJ</name>
<comment type="function">
    <text evidence="1">Part of the high-affinity ATP-driven potassium transport (or Kdp) system, which catalyzes the hydrolysis of ATP coupled with the electrogenic transport of potassium into the cytoplasm. This subunit binds the periplasmic potassium ions and delivers the ions to the membrane domain of KdpB through an intramembrane tunnel.</text>
</comment>
<comment type="subunit">
    <text evidence="1">The system is composed of three essential subunits: KdpA, KdpB and KdpC.</text>
</comment>
<comment type="subcellular location">
    <subcellularLocation>
        <location evidence="1">Cell inner membrane</location>
        <topology evidence="1">Multi-pass membrane protein</topology>
    </subcellularLocation>
</comment>
<comment type="similarity">
    <text evidence="1">Belongs to the KdpA family.</text>
</comment>
<protein>
    <recommendedName>
        <fullName evidence="1">Potassium-transporting ATPase potassium-binding subunit</fullName>
    </recommendedName>
    <alternativeName>
        <fullName evidence="1">ATP phosphohydrolase [potassium-transporting] A chain</fullName>
    </alternativeName>
    <alternativeName>
        <fullName evidence="1">Potassium-binding and translocating subunit A</fullName>
    </alternativeName>
    <alternativeName>
        <fullName evidence="1">Potassium-translocating ATPase A chain</fullName>
    </alternativeName>
</protein>
<keyword id="KW-0997">Cell inner membrane</keyword>
<keyword id="KW-1003">Cell membrane</keyword>
<keyword id="KW-0406">Ion transport</keyword>
<keyword id="KW-0472">Membrane</keyword>
<keyword id="KW-0630">Potassium</keyword>
<keyword id="KW-0633">Potassium transport</keyword>
<keyword id="KW-0812">Transmembrane</keyword>
<keyword id="KW-1133">Transmembrane helix</keyword>
<keyword id="KW-0813">Transport</keyword>
<dbReference type="EMBL" id="CP001068">
    <property type="protein sequence ID" value="ACD28708.1"/>
    <property type="molecule type" value="Genomic_DNA"/>
</dbReference>
<dbReference type="SMR" id="B2UH25"/>
<dbReference type="STRING" id="402626.Rpic_3589"/>
<dbReference type="KEGG" id="rpi:Rpic_3589"/>
<dbReference type="PATRIC" id="fig|402626.5.peg.4726"/>
<dbReference type="eggNOG" id="COG2060">
    <property type="taxonomic scope" value="Bacteria"/>
</dbReference>
<dbReference type="HOGENOM" id="CLU_018614_3_0_4"/>
<dbReference type="GO" id="GO:0005886">
    <property type="term" value="C:plasma membrane"/>
    <property type="evidence" value="ECO:0007669"/>
    <property type="project" value="UniProtKB-SubCell"/>
</dbReference>
<dbReference type="GO" id="GO:0008556">
    <property type="term" value="F:P-type potassium transmembrane transporter activity"/>
    <property type="evidence" value="ECO:0007669"/>
    <property type="project" value="InterPro"/>
</dbReference>
<dbReference type="GO" id="GO:0030955">
    <property type="term" value="F:potassium ion binding"/>
    <property type="evidence" value="ECO:0007669"/>
    <property type="project" value="UniProtKB-UniRule"/>
</dbReference>
<dbReference type="HAMAP" id="MF_00275">
    <property type="entry name" value="KdpA"/>
    <property type="match status" value="1"/>
</dbReference>
<dbReference type="InterPro" id="IPR004623">
    <property type="entry name" value="KdpA"/>
</dbReference>
<dbReference type="NCBIfam" id="TIGR00680">
    <property type="entry name" value="kdpA"/>
    <property type="match status" value="1"/>
</dbReference>
<dbReference type="PANTHER" id="PTHR30607">
    <property type="entry name" value="POTASSIUM-TRANSPORTING ATPASE A CHAIN"/>
    <property type="match status" value="1"/>
</dbReference>
<dbReference type="PANTHER" id="PTHR30607:SF2">
    <property type="entry name" value="POTASSIUM-TRANSPORTING ATPASE POTASSIUM-BINDING SUBUNIT"/>
    <property type="match status" value="1"/>
</dbReference>
<dbReference type="Pfam" id="PF03814">
    <property type="entry name" value="KdpA"/>
    <property type="match status" value="1"/>
</dbReference>
<dbReference type="PIRSF" id="PIRSF001294">
    <property type="entry name" value="K_ATPaseA"/>
    <property type="match status" value="1"/>
</dbReference>
<feature type="chain" id="PRO_1000114695" description="Potassium-transporting ATPase potassium-binding subunit">
    <location>
        <begin position="1"/>
        <end position="590"/>
    </location>
</feature>
<feature type="transmembrane region" description="Helical" evidence="1">
    <location>
        <begin position="3"/>
        <end position="23"/>
    </location>
</feature>
<feature type="transmembrane region" description="Helical" evidence="1">
    <location>
        <begin position="63"/>
        <end position="83"/>
    </location>
</feature>
<feature type="transmembrane region" description="Helical" evidence="1">
    <location>
        <begin position="134"/>
        <end position="154"/>
    </location>
</feature>
<feature type="transmembrane region" description="Helical" evidence="1">
    <location>
        <begin position="177"/>
        <end position="197"/>
    </location>
</feature>
<feature type="transmembrane region" description="Helical" evidence="1">
    <location>
        <begin position="284"/>
        <end position="304"/>
    </location>
</feature>
<feature type="transmembrane region" description="Helical" evidence="1">
    <location>
        <begin position="312"/>
        <end position="332"/>
    </location>
</feature>
<feature type="transmembrane region" description="Helical" evidence="1">
    <location>
        <begin position="359"/>
        <end position="379"/>
    </location>
</feature>
<feature type="transmembrane region" description="Helical" evidence="1">
    <location>
        <begin position="388"/>
        <end position="408"/>
    </location>
</feature>
<feature type="transmembrane region" description="Helical" evidence="1">
    <location>
        <begin position="411"/>
        <end position="431"/>
    </location>
</feature>
<feature type="transmembrane region" description="Helical" evidence="1">
    <location>
        <begin position="451"/>
        <end position="471"/>
    </location>
</feature>
<feature type="transmembrane region" description="Helical" evidence="1">
    <location>
        <begin position="515"/>
        <end position="535"/>
    </location>
</feature>
<feature type="transmembrane region" description="Helical" evidence="1">
    <location>
        <begin position="558"/>
        <end position="578"/>
    </location>
</feature>